<protein>
    <recommendedName>
        <fullName evidence="1">Serine-protein kinase RsbW</fullName>
        <ecNumber evidence="1">2.7.11.1</ecNumber>
    </recommendedName>
    <alternativeName>
        <fullName evidence="1">Anti-sigma-B factor</fullName>
    </alternativeName>
    <alternativeName>
        <fullName evidence="1">Sigma-B negative effector RsbW</fullName>
    </alternativeName>
</protein>
<sequence>MATMHDKITLQLPAKPEYVSLGRLSLSGIASRAGFSYEAIEDLKIAVSEAITNSVKHAFKGEEDGEITVEYHIYEDKLEVRVSDNGTSFDLETRKQEIGPYEVGEDAEMMRIGGLGLFLIETLMDDVKLYYDEGVSVVMTKYINEKQVEENAKSIST</sequence>
<reference key="1">
    <citation type="journal article" date="2001" name="Science">
        <title>Comparative genomics of Listeria species.</title>
        <authorList>
            <person name="Glaser P."/>
            <person name="Frangeul L."/>
            <person name="Buchrieser C."/>
            <person name="Rusniok C."/>
            <person name="Amend A."/>
            <person name="Baquero F."/>
            <person name="Berche P."/>
            <person name="Bloecker H."/>
            <person name="Brandt P."/>
            <person name="Chakraborty T."/>
            <person name="Charbit A."/>
            <person name="Chetouani F."/>
            <person name="Couve E."/>
            <person name="de Daruvar A."/>
            <person name="Dehoux P."/>
            <person name="Domann E."/>
            <person name="Dominguez-Bernal G."/>
            <person name="Duchaud E."/>
            <person name="Durant L."/>
            <person name="Dussurget O."/>
            <person name="Entian K.-D."/>
            <person name="Fsihi H."/>
            <person name="Garcia-del Portillo F."/>
            <person name="Garrido P."/>
            <person name="Gautier L."/>
            <person name="Goebel W."/>
            <person name="Gomez-Lopez N."/>
            <person name="Hain T."/>
            <person name="Hauf J."/>
            <person name="Jackson D."/>
            <person name="Jones L.-M."/>
            <person name="Kaerst U."/>
            <person name="Kreft J."/>
            <person name="Kuhn M."/>
            <person name="Kunst F."/>
            <person name="Kurapkat G."/>
            <person name="Madueno E."/>
            <person name="Maitournam A."/>
            <person name="Mata Vicente J."/>
            <person name="Ng E."/>
            <person name="Nedjari H."/>
            <person name="Nordsiek G."/>
            <person name="Novella S."/>
            <person name="de Pablos B."/>
            <person name="Perez-Diaz J.-C."/>
            <person name="Purcell R."/>
            <person name="Remmel B."/>
            <person name="Rose M."/>
            <person name="Schlueter T."/>
            <person name="Simoes N."/>
            <person name="Tierrez A."/>
            <person name="Vazquez-Boland J.-A."/>
            <person name="Voss H."/>
            <person name="Wehland J."/>
            <person name="Cossart P."/>
        </authorList>
    </citation>
    <scope>NUCLEOTIDE SEQUENCE [LARGE SCALE GENOMIC DNA]</scope>
    <source>
        <strain>ATCC BAA-680 / CLIP 11262</strain>
    </source>
</reference>
<organism>
    <name type="scientific">Listeria innocua serovar 6a (strain ATCC BAA-680 / CLIP 11262)</name>
    <dbReference type="NCBI Taxonomy" id="272626"/>
    <lineage>
        <taxon>Bacteria</taxon>
        <taxon>Bacillati</taxon>
        <taxon>Bacillota</taxon>
        <taxon>Bacilli</taxon>
        <taxon>Bacillales</taxon>
        <taxon>Listeriaceae</taxon>
        <taxon>Listeria</taxon>
    </lineage>
</organism>
<gene>
    <name evidence="1" type="primary">rsbW</name>
    <name type="ordered locus">lin0893</name>
</gene>
<evidence type="ECO:0000255" key="1">
    <source>
        <dbReference type="HAMAP-Rule" id="MF_00638"/>
    </source>
</evidence>
<name>RSBW_LISIN</name>
<keyword id="KW-0067">ATP-binding</keyword>
<keyword id="KW-0418">Kinase</keyword>
<keyword id="KW-0547">Nucleotide-binding</keyword>
<keyword id="KW-0723">Serine/threonine-protein kinase</keyword>
<keyword id="KW-0808">Transferase</keyword>
<proteinExistence type="inferred from homology"/>
<feature type="chain" id="PRO_0000203534" description="Serine-protein kinase RsbW">
    <location>
        <begin position="1"/>
        <end position="157"/>
    </location>
</feature>
<accession>Q92DC2</accession>
<comment type="function">
    <text evidence="1">Negative regulator of sigma-B activity. Phosphorylates and inactivates its specific antagonist protein, RsbV. Upon phosphorylation of RsbV, RsbW is released and binds to sigma-B, thereby blocking its ability to form an RNA polymerase holoenzyme (E-sigma-B).</text>
</comment>
<comment type="catalytic activity">
    <reaction evidence="1">
        <text>L-seryl-[protein] + ATP = O-phospho-L-seryl-[protein] + ADP + H(+)</text>
        <dbReference type="Rhea" id="RHEA:17989"/>
        <dbReference type="Rhea" id="RHEA-COMP:9863"/>
        <dbReference type="Rhea" id="RHEA-COMP:11604"/>
        <dbReference type="ChEBI" id="CHEBI:15378"/>
        <dbReference type="ChEBI" id="CHEBI:29999"/>
        <dbReference type="ChEBI" id="CHEBI:30616"/>
        <dbReference type="ChEBI" id="CHEBI:83421"/>
        <dbReference type="ChEBI" id="CHEBI:456216"/>
        <dbReference type="EC" id="2.7.11.1"/>
    </reaction>
</comment>
<comment type="catalytic activity">
    <reaction evidence="1">
        <text>L-threonyl-[protein] + ATP = O-phospho-L-threonyl-[protein] + ADP + H(+)</text>
        <dbReference type="Rhea" id="RHEA:46608"/>
        <dbReference type="Rhea" id="RHEA-COMP:11060"/>
        <dbReference type="Rhea" id="RHEA-COMP:11605"/>
        <dbReference type="ChEBI" id="CHEBI:15378"/>
        <dbReference type="ChEBI" id="CHEBI:30013"/>
        <dbReference type="ChEBI" id="CHEBI:30616"/>
        <dbReference type="ChEBI" id="CHEBI:61977"/>
        <dbReference type="ChEBI" id="CHEBI:456216"/>
        <dbReference type="EC" id="2.7.11.1"/>
    </reaction>
</comment>
<comment type="similarity">
    <text evidence="1">Belongs to the anti-sigma-factor family.</text>
</comment>
<dbReference type="EC" id="2.7.11.1" evidence="1"/>
<dbReference type="EMBL" id="AL596166">
    <property type="protein sequence ID" value="CAC96125.1"/>
    <property type="molecule type" value="Genomic_DNA"/>
</dbReference>
<dbReference type="PIR" id="AE1544">
    <property type="entry name" value="AE1544"/>
</dbReference>
<dbReference type="RefSeq" id="WP_003761314.1">
    <property type="nucleotide sequence ID" value="NC_003212.1"/>
</dbReference>
<dbReference type="SMR" id="Q92DC2"/>
<dbReference type="STRING" id="272626.gene:17565220"/>
<dbReference type="GeneID" id="93234336"/>
<dbReference type="KEGG" id="lin:rsbW"/>
<dbReference type="eggNOG" id="COG2172">
    <property type="taxonomic scope" value="Bacteria"/>
</dbReference>
<dbReference type="HOGENOM" id="CLU_090336_11_1_9"/>
<dbReference type="OrthoDB" id="9798941at2"/>
<dbReference type="Proteomes" id="UP000002513">
    <property type="component" value="Chromosome"/>
</dbReference>
<dbReference type="GO" id="GO:0005524">
    <property type="term" value="F:ATP binding"/>
    <property type="evidence" value="ECO:0007669"/>
    <property type="project" value="UniProtKB-KW"/>
</dbReference>
<dbReference type="GO" id="GO:0106310">
    <property type="term" value="F:protein serine kinase activity"/>
    <property type="evidence" value="ECO:0007669"/>
    <property type="project" value="RHEA"/>
</dbReference>
<dbReference type="GO" id="GO:0004674">
    <property type="term" value="F:protein serine/threonine kinase activity"/>
    <property type="evidence" value="ECO:0007669"/>
    <property type="project" value="UniProtKB-KW"/>
</dbReference>
<dbReference type="GO" id="GO:0016989">
    <property type="term" value="F:sigma factor antagonist activity"/>
    <property type="evidence" value="ECO:0007669"/>
    <property type="project" value="InterPro"/>
</dbReference>
<dbReference type="CDD" id="cd16936">
    <property type="entry name" value="HATPase_RsbW-like"/>
    <property type="match status" value="1"/>
</dbReference>
<dbReference type="FunFam" id="3.30.565.10:FF:000026">
    <property type="entry name" value="Serine-protein kinase RsbW"/>
    <property type="match status" value="1"/>
</dbReference>
<dbReference type="Gene3D" id="3.30.565.10">
    <property type="entry name" value="Histidine kinase-like ATPase, C-terminal domain"/>
    <property type="match status" value="1"/>
</dbReference>
<dbReference type="HAMAP" id="MF_00638">
    <property type="entry name" value="Anti_sigma_B"/>
    <property type="match status" value="1"/>
</dbReference>
<dbReference type="InterPro" id="IPR050267">
    <property type="entry name" value="Anti-sigma-factor_SerPK"/>
</dbReference>
<dbReference type="InterPro" id="IPR036890">
    <property type="entry name" value="HATPase_C_sf"/>
</dbReference>
<dbReference type="InterPro" id="IPR010193">
    <property type="entry name" value="RsbW"/>
</dbReference>
<dbReference type="NCBIfam" id="NF003144">
    <property type="entry name" value="PRK04069.1"/>
    <property type="match status" value="1"/>
</dbReference>
<dbReference type="NCBIfam" id="TIGR01924">
    <property type="entry name" value="rsbW_low_gc"/>
    <property type="match status" value="1"/>
</dbReference>
<dbReference type="PANTHER" id="PTHR35526">
    <property type="entry name" value="ANTI-SIGMA-F FACTOR RSBW-RELATED"/>
    <property type="match status" value="1"/>
</dbReference>
<dbReference type="PANTHER" id="PTHR35526:SF9">
    <property type="entry name" value="SERINE-PROTEIN KINASE RSBW"/>
    <property type="match status" value="1"/>
</dbReference>
<dbReference type="Pfam" id="PF13581">
    <property type="entry name" value="HATPase_c_2"/>
    <property type="match status" value="1"/>
</dbReference>
<dbReference type="SUPFAM" id="SSF55874">
    <property type="entry name" value="ATPase domain of HSP90 chaperone/DNA topoisomerase II/histidine kinase"/>
    <property type="match status" value="1"/>
</dbReference>